<protein>
    <recommendedName>
        <fullName>Succinate-semialdehyde dehydrogenase [NADP(+)]</fullName>
        <shortName>SSDH</shortName>
        <ecNumber>1.2.1.79</ecNumber>
    </recommendedName>
</protein>
<sequence length="477" mass="51240">MTATPQASARPERPFATVNPYTGETVKTFPFLESAEIPALIERADQAYREWGQRPVTERAAIMRRAAELMLERTDELASLITLEMGKLLREAKGEVALAASILNYYGEQGPSFLEPKTIPVPQGEAAVLHAPLGVLLGIEPWNYPLYQVVRFAAPNLVVGNTVLLKHSELCPQSALALEQLFHDAGVPQGAYTNLFLRIADIEQVIAHPAVQGVSLTGSERAGASVAELAGRHLKKCVLELGGSDPFIVLDAEDLDTTVKAAATGRLSNTGQACIAAKRLMVVDDLYDEFVSRLGQTFSAFVPGDPADPSTRLGPLSSEQAARDLQAQVQDAIDKGATVVAGGQRPEHPGAFVQPTVLTDVTPDMRAYHEELFGPVAVVYRVRDEDEAVALANASTYGLGGAVFSSDLDRAQRVAERLDTGMVWINHPTSSAADLPFGGVKRSGFGRELSSMGMLEFTNQKLVRAFPTKQKPAQVAG</sequence>
<proteinExistence type="inferred from homology"/>
<feature type="chain" id="PRO_0000056571" description="Succinate-semialdehyde dehydrogenase [NADP(+)]">
    <location>
        <begin position="1"/>
        <end position="477"/>
    </location>
</feature>
<feature type="active site" description="Proton acceptor" evidence="2">
    <location>
        <position position="240"/>
    </location>
</feature>
<feature type="active site" description="Nucleophile" evidence="2">
    <location>
        <position position="274"/>
    </location>
</feature>
<feature type="binding site" evidence="1">
    <location>
        <begin position="142"/>
        <end position="143"/>
    </location>
    <ligand>
        <name>NADP(+)</name>
        <dbReference type="ChEBI" id="CHEBI:58349"/>
    </ligand>
</feature>
<feature type="binding site" evidence="1">
    <location>
        <begin position="166"/>
        <end position="169"/>
    </location>
    <ligand>
        <name>NADP(+)</name>
        <dbReference type="ChEBI" id="CHEBI:58349"/>
    </ligand>
</feature>
<feature type="binding site" evidence="1">
    <location>
        <begin position="218"/>
        <end position="219"/>
    </location>
    <ligand>
        <name>NADP(+)</name>
        <dbReference type="ChEBI" id="CHEBI:58349"/>
    </ligand>
</feature>
<feature type="binding site" evidence="1">
    <location>
        <position position="241"/>
    </location>
    <ligand>
        <name>NADP(+)</name>
        <dbReference type="ChEBI" id="CHEBI:58349"/>
    </ligand>
</feature>
<feature type="binding site" evidence="1">
    <location>
        <position position="371"/>
    </location>
    <ligand>
        <name>NADP(+)</name>
        <dbReference type="ChEBI" id="CHEBI:58349"/>
    </ligand>
</feature>
<comment type="function">
    <text evidence="1">Catalyzes the NADP(+) dependent oxidation of succinate semialdehyde to succinate.</text>
</comment>
<comment type="catalytic activity">
    <reaction>
        <text>succinate semialdehyde + NADP(+) + H2O = succinate + NADPH + 2 H(+)</text>
        <dbReference type="Rhea" id="RHEA:13213"/>
        <dbReference type="ChEBI" id="CHEBI:15377"/>
        <dbReference type="ChEBI" id="CHEBI:15378"/>
        <dbReference type="ChEBI" id="CHEBI:30031"/>
        <dbReference type="ChEBI" id="CHEBI:57706"/>
        <dbReference type="ChEBI" id="CHEBI:57783"/>
        <dbReference type="ChEBI" id="CHEBI:58349"/>
        <dbReference type="EC" id="1.2.1.79"/>
    </reaction>
</comment>
<comment type="pathway">
    <text>Amino-acid degradation; 4-aminobutanoate degradation.</text>
</comment>
<comment type="similarity">
    <text evidence="3">Belongs to the aldehyde dehydrogenase family.</text>
</comment>
<dbReference type="EC" id="1.2.1.79"/>
<dbReference type="EMBL" id="AB003475">
    <property type="protein sequence ID" value="BAA21377.1"/>
    <property type="molecule type" value="Genomic_DNA"/>
</dbReference>
<dbReference type="EMBL" id="AE001825">
    <property type="protein sequence ID" value="AAF12439.1"/>
    <property type="molecule type" value="Genomic_DNA"/>
</dbReference>
<dbReference type="PIR" id="C75589">
    <property type="entry name" value="C75589"/>
</dbReference>
<dbReference type="RefSeq" id="NP_285666.1">
    <property type="nucleotide sequence ID" value="NC_001264.1"/>
</dbReference>
<dbReference type="RefSeq" id="WP_010889602.1">
    <property type="nucleotide sequence ID" value="NC_001264.1"/>
</dbReference>
<dbReference type="SMR" id="O32507"/>
<dbReference type="STRING" id="243230.DR_A0343"/>
<dbReference type="PaxDb" id="243230-DR_A0343"/>
<dbReference type="EnsemblBacteria" id="AAF12439">
    <property type="protein sequence ID" value="AAF12439"/>
    <property type="gene ID" value="DR_A0343"/>
</dbReference>
<dbReference type="GeneID" id="69519229"/>
<dbReference type="KEGG" id="dra:DR_A0343"/>
<dbReference type="PATRIC" id="fig|243230.17.peg.3235"/>
<dbReference type="eggNOG" id="COG1012">
    <property type="taxonomic scope" value="Bacteria"/>
</dbReference>
<dbReference type="HOGENOM" id="CLU_005391_1_0_0"/>
<dbReference type="InParanoid" id="O32507"/>
<dbReference type="OrthoDB" id="9762913at2"/>
<dbReference type="UniPathway" id="UPA00733"/>
<dbReference type="Proteomes" id="UP000002524">
    <property type="component" value="Chromosome 2"/>
</dbReference>
<dbReference type="GO" id="GO:0004030">
    <property type="term" value="F:aldehyde dehydrogenase [NAD(P)+] activity"/>
    <property type="evidence" value="ECO:0007669"/>
    <property type="project" value="InterPro"/>
</dbReference>
<dbReference type="GO" id="GO:0004777">
    <property type="term" value="F:succinate-semialdehyde dehydrogenase (NAD+) activity"/>
    <property type="evidence" value="ECO:0000318"/>
    <property type="project" value="GO_Central"/>
</dbReference>
<dbReference type="GO" id="GO:0036243">
    <property type="term" value="F:succinate-semialdehyde dehydrogenase (NADP+) activity"/>
    <property type="evidence" value="ECO:0007669"/>
    <property type="project" value="UniProtKB-EC"/>
</dbReference>
<dbReference type="GO" id="GO:0009450">
    <property type="term" value="P:gamma-aminobutyric acid catabolic process"/>
    <property type="evidence" value="ECO:0007669"/>
    <property type="project" value="UniProtKB-UniPathway"/>
</dbReference>
<dbReference type="CDD" id="cd07100">
    <property type="entry name" value="ALDH_SSADH1_GabD1"/>
    <property type="match status" value="1"/>
</dbReference>
<dbReference type="FunFam" id="3.40.309.10:FF:000009">
    <property type="entry name" value="Aldehyde dehydrogenase A"/>
    <property type="match status" value="1"/>
</dbReference>
<dbReference type="FunFam" id="3.40.605.10:FF:000012">
    <property type="entry name" value="NAD-dependent succinate-semialdehyde dehydrogenase"/>
    <property type="match status" value="1"/>
</dbReference>
<dbReference type="Gene3D" id="3.40.605.10">
    <property type="entry name" value="Aldehyde Dehydrogenase, Chain A, domain 1"/>
    <property type="match status" value="1"/>
</dbReference>
<dbReference type="Gene3D" id="3.40.309.10">
    <property type="entry name" value="Aldehyde Dehydrogenase, Chain A, domain 2"/>
    <property type="match status" value="1"/>
</dbReference>
<dbReference type="InterPro" id="IPR016161">
    <property type="entry name" value="Ald_DH/histidinol_DH"/>
</dbReference>
<dbReference type="InterPro" id="IPR016163">
    <property type="entry name" value="Ald_DH_C"/>
</dbReference>
<dbReference type="InterPro" id="IPR016160">
    <property type="entry name" value="Ald_DH_CS_CYS"/>
</dbReference>
<dbReference type="InterPro" id="IPR016162">
    <property type="entry name" value="Ald_DH_N"/>
</dbReference>
<dbReference type="InterPro" id="IPR015590">
    <property type="entry name" value="Aldehyde_DH_dom"/>
</dbReference>
<dbReference type="InterPro" id="IPR044148">
    <property type="entry name" value="ALDH_GabD1-like"/>
</dbReference>
<dbReference type="InterPro" id="IPR047110">
    <property type="entry name" value="GABD/Sad-like"/>
</dbReference>
<dbReference type="PANTHER" id="PTHR43217">
    <property type="entry name" value="SUCCINATE SEMIALDEHYDE DEHYDROGENASE [NAD(P)+] SAD"/>
    <property type="match status" value="1"/>
</dbReference>
<dbReference type="PANTHER" id="PTHR43217:SF2">
    <property type="entry name" value="SUCCINATE-SEMIALDEHYDE DEHYDROGENASE [NADP(+)]"/>
    <property type="match status" value="1"/>
</dbReference>
<dbReference type="Pfam" id="PF00171">
    <property type="entry name" value="Aldedh"/>
    <property type="match status" value="1"/>
</dbReference>
<dbReference type="SUPFAM" id="SSF53720">
    <property type="entry name" value="ALDH-like"/>
    <property type="match status" value="1"/>
</dbReference>
<dbReference type="PROSITE" id="PS00070">
    <property type="entry name" value="ALDEHYDE_DEHYDR_CYS"/>
    <property type="match status" value="1"/>
</dbReference>
<reference key="1">
    <citation type="submission" date="1997-04" db="EMBL/GenBank/DDBJ databases">
        <authorList>
            <person name="Narumi I."/>
            <person name="Kong X."/>
            <person name="Du Z."/>
            <person name="Cherdchu K."/>
            <person name="Kitayama S."/>
            <person name="Watanabe H."/>
        </authorList>
    </citation>
    <scope>NUCLEOTIDE SEQUENCE [GENOMIC DNA]</scope>
    <source>
        <strain>KD8301</strain>
    </source>
</reference>
<reference key="2">
    <citation type="journal article" date="1999" name="Science">
        <title>Genome sequence of the radioresistant bacterium Deinococcus radiodurans R1.</title>
        <authorList>
            <person name="White O."/>
            <person name="Eisen J.A."/>
            <person name="Heidelberg J.F."/>
            <person name="Hickey E.K."/>
            <person name="Peterson J.D."/>
            <person name="Dodson R.J."/>
            <person name="Haft D.H."/>
            <person name="Gwinn M.L."/>
            <person name="Nelson W.C."/>
            <person name="Richardson D.L."/>
            <person name="Moffat K.S."/>
            <person name="Qin H."/>
            <person name="Jiang L."/>
            <person name="Pamphile W."/>
            <person name="Crosby M."/>
            <person name="Shen M."/>
            <person name="Vamathevan J.J."/>
            <person name="Lam P."/>
            <person name="McDonald L.A."/>
            <person name="Utterback T.R."/>
            <person name="Zalewski C."/>
            <person name="Makarova K.S."/>
            <person name="Aravind L."/>
            <person name="Daly M.J."/>
            <person name="Minton K.W."/>
            <person name="Fleischmann R.D."/>
            <person name="Ketchum K.A."/>
            <person name="Nelson K.E."/>
            <person name="Salzberg S.L."/>
            <person name="Smith H.O."/>
            <person name="Venter J.C."/>
            <person name="Fraser C.M."/>
        </authorList>
    </citation>
    <scope>NUCLEOTIDE SEQUENCE [LARGE SCALE GENOMIC DNA]</scope>
    <source>
        <strain>ATCC 13939 / DSM 20539 / JCM 16871 / CCUG 27074 / LMG 4051 / NBRC 15346 / NCIMB 9279 / VKM B-1422 / R1</strain>
    </source>
</reference>
<evidence type="ECO:0000250" key="1"/>
<evidence type="ECO:0000255" key="2">
    <source>
        <dbReference type="PROSITE-ProRule" id="PRU10008"/>
    </source>
</evidence>
<evidence type="ECO:0000305" key="3"/>
<accession>O32507</accession>
<name>GABD_DEIRA</name>
<keyword id="KW-0521">NADP</keyword>
<keyword id="KW-0560">Oxidoreductase</keyword>
<keyword id="KW-1185">Reference proteome</keyword>
<gene>
    <name type="primary">ssdA</name>
    <name type="ordered locus">DR_A0343</name>
</gene>
<organism>
    <name type="scientific">Deinococcus radiodurans (strain ATCC 13939 / DSM 20539 / JCM 16871 / CCUG 27074 / LMG 4051 / NBRC 15346 / NCIMB 9279 / VKM B-1422 / R1)</name>
    <dbReference type="NCBI Taxonomy" id="243230"/>
    <lineage>
        <taxon>Bacteria</taxon>
        <taxon>Thermotogati</taxon>
        <taxon>Deinococcota</taxon>
        <taxon>Deinococci</taxon>
        <taxon>Deinococcales</taxon>
        <taxon>Deinococcaceae</taxon>
        <taxon>Deinococcus</taxon>
    </lineage>
</organism>